<accession>P0DN67</accession>
<reference key="1">
    <citation type="unpublished observations" date="2015-10">
        <authorList>
            <person name="Gorson J."/>
            <person name="Anand P."/>
            <person name="Holford M."/>
        </authorList>
    </citation>
    <scope>NUCLEOTIDE SEQUENCE [MRNA]</scope>
</reference>
<proteinExistence type="evidence at transcript level"/>
<feature type="signal peptide" evidence="4">
    <location>
        <begin position="1" status="less than"/>
        <end position="11"/>
    </location>
</feature>
<feature type="chain" id="PRO_0000435101" description="Tereporin-Ts1">
    <location>
        <begin position="12"/>
        <end position="207" status="greater than"/>
    </location>
</feature>
<feature type="region of interest" description="N-terminal region" evidence="5">
    <location>
        <begin position="35"/>
        <end position="54"/>
    </location>
</feature>
<feature type="binding site" evidence="3">
    <location>
        <position position="111"/>
    </location>
    <ligand>
        <name>phosphocholine</name>
        <dbReference type="ChEBI" id="CHEBI:295975"/>
    </ligand>
</feature>
<feature type="binding site" evidence="3">
    <location>
        <position position="129"/>
    </location>
    <ligand>
        <name>phosphocholine</name>
        <dbReference type="ChEBI" id="CHEBI:295975"/>
    </ligand>
</feature>
<feature type="binding site" evidence="3">
    <location>
        <position position="131"/>
    </location>
    <ligand>
        <name>phosphocholine</name>
        <dbReference type="ChEBI" id="CHEBI:295975"/>
    </ligand>
</feature>
<feature type="binding site" evidence="3">
    <location>
        <position position="164"/>
    </location>
    <ligand>
        <name>phosphocholine</name>
        <dbReference type="ChEBI" id="CHEBI:295975"/>
    </ligand>
</feature>
<feature type="binding site" evidence="3">
    <location>
        <position position="165"/>
    </location>
    <ligand>
        <name>phosphocholine</name>
        <dbReference type="ChEBI" id="CHEBI:295975"/>
    </ligand>
</feature>
<feature type="non-terminal residue">
    <location>
        <position position="1"/>
    </location>
</feature>
<feature type="non-terminal residue">
    <location>
        <position position="207"/>
    </location>
</feature>
<comment type="function">
    <text evidence="1">Pore-forming protein that forms pores of around 1 nm and causes cardiac stimulation and cytolysis.</text>
</comment>
<comment type="subunit">
    <text evidence="2">Octamer or nonamer in membranes. Monomer in the soluble state.</text>
</comment>
<comment type="subcellular location">
    <subcellularLocation>
        <location evidence="2">Secreted</location>
    </subcellularLocation>
    <subcellularLocation>
        <location evidence="3">Nematocyst</location>
    </subcellularLocation>
    <subcellularLocation>
        <location evidence="2">Target cell membrane</location>
    </subcellularLocation>
    <text evidence="2">Forms an alpha-helical membrane channel in the prey.</text>
</comment>
<comment type="tissue specificity">
    <text evidence="7">Expressed by the venom duct.</text>
</comment>
<comment type="similarity">
    <text evidence="6">Belongs to the actinoporin family. Conoidea subfamily.</text>
</comment>
<name>ACTP1_TERSU</name>
<protein>
    <recommendedName>
        <fullName evidence="6">Tereporin-Ts1</fullName>
    </recommendedName>
    <alternativeName>
        <fullName evidence="6">Actinoporin-like protein</fullName>
    </alternativeName>
</protein>
<sequence length="207" mass="22598">VIFALVLGNASPVQSVAITATAVATAIGAASQIISAGTSLASTILSGLAASGYRVTCAIQVENWTRYPLIYATVQINRNAAVTVSPSSILPGKREGFSVRMPNGLAEGVYGTVSWELLGIKRRFVLMWSAPFNFNHFSNWMGVGLTRPGITKVPSGMTWFNKMYYDKTGRVGNLHFERGEFYYETNPVIYRDSKFEIEGTMTNIHNA</sequence>
<dbReference type="SMR" id="P0DN67"/>
<dbReference type="GO" id="GO:0005576">
    <property type="term" value="C:extracellular region"/>
    <property type="evidence" value="ECO:0007669"/>
    <property type="project" value="UniProtKB-SubCell"/>
</dbReference>
<dbReference type="GO" id="GO:0016020">
    <property type="term" value="C:membrane"/>
    <property type="evidence" value="ECO:0007669"/>
    <property type="project" value="UniProtKB-KW"/>
</dbReference>
<dbReference type="GO" id="GO:0042151">
    <property type="term" value="C:nematocyst"/>
    <property type="evidence" value="ECO:0007669"/>
    <property type="project" value="UniProtKB-SubCell"/>
</dbReference>
<dbReference type="GO" id="GO:0044218">
    <property type="term" value="C:other organism cell membrane"/>
    <property type="evidence" value="ECO:0007669"/>
    <property type="project" value="UniProtKB-KW"/>
</dbReference>
<dbReference type="GO" id="GO:0090729">
    <property type="term" value="F:toxin activity"/>
    <property type="evidence" value="ECO:0007669"/>
    <property type="project" value="UniProtKB-KW"/>
</dbReference>
<dbReference type="GO" id="GO:0031640">
    <property type="term" value="P:killing of cells of another organism"/>
    <property type="evidence" value="ECO:0007669"/>
    <property type="project" value="UniProtKB-KW"/>
</dbReference>
<dbReference type="GO" id="GO:0006811">
    <property type="term" value="P:monoatomic ion transport"/>
    <property type="evidence" value="ECO:0007669"/>
    <property type="project" value="UniProtKB-KW"/>
</dbReference>
<dbReference type="Gene3D" id="2.60.270.20">
    <property type="entry name" value="Cytolysin/lectin"/>
    <property type="match status" value="1"/>
</dbReference>
<dbReference type="InterPro" id="IPR050677">
    <property type="entry name" value="Actinoporin_PFT"/>
</dbReference>
<dbReference type="InterPro" id="IPR015926">
    <property type="entry name" value="Cytolysin/lectin"/>
</dbReference>
<dbReference type="PANTHER" id="PTHR40388">
    <property type="entry name" value="BRYOPORIN"/>
    <property type="match status" value="1"/>
</dbReference>
<dbReference type="PANTHER" id="PTHR40388:SF1">
    <property type="entry name" value="BRYOPORIN"/>
    <property type="match status" value="1"/>
</dbReference>
<dbReference type="SUPFAM" id="SSF63724">
    <property type="entry name" value="Cytolysin/lectin"/>
    <property type="match status" value="1"/>
</dbReference>
<evidence type="ECO:0000250" key="1"/>
<evidence type="ECO:0000250" key="2">
    <source>
        <dbReference type="UniProtKB" id="B9W5G6"/>
    </source>
</evidence>
<evidence type="ECO:0000250" key="3">
    <source>
        <dbReference type="UniProtKB" id="P07845"/>
    </source>
</evidence>
<evidence type="ECO:0000250" key="4">
    <source>
        <dbReference type="UniProtKB" id="P0DKQ8"/>
    </source>
</evidence>
<evidence type="ECO:0000250" key="5">
    <source>
        <dbReference type="UniProtKB" id="P61914"/>
    </source>
</evidence>
<evidence type="ECO:0000305" key="6"/>
<evidence type="ECO:0000305" key="7">
    <source ref="1"/>
</evidence>
<organism>
    <name type="scientific">Terebra subulata</name>
    <name type="common">Chocolate spotted auger</name>
    <name type="synonym">Buccinum subulatum</name>
    <dbReference type="NCBI Taxonomy" id="89435"/>
    <lineage>
        <taxon>Eukaryota</taxon>
        <taxon>Metazoa</taxon>
        <taxon>Spiralia</taxon>
        <taxon>Lophotrochozoa</taxon>
        <taxon>Mollusca</taxon>
        <taxon>Gastropoda</taxon>
        <taxon>Caenogastropoda</taxon>
        <taxon>Neogastropoda</taxon>
        <taxon>Conoidea</taxon>
        <taxon>Terebridae</taxon>
        <taxon>Terebra</taxon>
    </lineage>
</organism>
<keyword id="KW-0204">Cytolysis</keyword>
<keyword id="KW-0406">Ion transport</keyword>
<keyword id="KW-0472">Membrane</keyword>
<keyword id="KW-0166">Nematocyst</keyword>
<keyword id="KW-0964">Secreted</keyword>
<keyword id="KW-0732">Signal</keyword>
<keyword id="KW-1052">Target cell membrane</keyword>
<keyword id="KW-1053">Target membrane</keyword>
<keyword id="KW-0800">Toxin</keyword>
<keyword id="KW-0812">Transmembrane</keyword>
<keyword id="KW-0813">Transport</keyword>